<comment type="function">
    <text evidence="1">One of the primary rRNA binding proteins, it binds directly near the 3'-end of the 23S rRNA, where it nucleates assembly of the 50S subunit.</text>
</comment>
<comment type="subunit">
    <text evidence="1">Part of the 50S ribosomal subunit. Forms a cluster with proteins L14 and L19.</text>
</comment>
<comment type="similarity">
    <text evidence="1">Belongs to the universal ribosomal protein uL3 family.</text>
</comment>
<sequence length="217" mass="23243">MSIGILGKKLGMSQLFDDKGNAVPVTLIEAGPCRVTQLKTNALDGYTAIQIGYGVSKEKHISKPEKGHLLKSGEELLKHLKEYRVEETSSYEIGNQITVKNFEVGQKVDISGKSMGRGFSGYQKRHGFSRGPMSHGSKNHRAPGSTGAGTTPGRIYPGKRMAGRYGGKQITTKGLLVLKIDDQKNLLVVKGSVPGKPGSIVNIKPNNVVGKKGGEKS</sequence>
<name>RL3_PROM2</name>
<keyword id="KW-0687">Ribonucleoprotein</keyword>
<keyword id="KW-0689">Ribosomal protein</keyword>
<keyword id="KW-0694">RNA-binding</keyword>
<keyword id="KW-0699">rRNA-binding</keyword>
<dbReference type="EMBL" id="CP000825">
    <property type="protein sequence ID" value="ABV51443.1"/>
    <property type="molecule type" value="Genomic_DNA"/>
</dbReference>
<dbReference type="RefSeq" id="WP_012008449.1">
    <property type="nucleotide sequence ID" value="NC_009840.1"/>
</dbReference>
<dbReference type="SMR" id="A8G762"/>
<dbReference type="STRING" id="93060.P9215_18301"/>
<dbReference type="KEGG" id="pmh:P9215_18301"/>
<dbReference type="eggNOG" id="COG0087">
    <property type="taxonomic scope" value="Bacteria"/>
</dbReference>
<dbReference type="HOGENOM" id="CLU_044142_4_1_3"/>
<dbReference type="OrthoDB" id="9806135at2"/>
<dbReference type="Proteomes" id="UP000002014">
    <property type="component" value="Chromosome"/>
</dbReference>
<dbReference type="GO" id="GO:0022625">
    <property type="term" value="C:cytosolic large ribosomal subunit"/>
    <property type="evidence" value="ECO:0007669"/>
    <property type="project" value="TreeGrafter"/>
</dbReference>
<dbReference type="GO" id="GO:0019843">
    <property type="term" value="F:rRNA binding"/>
    <property type="evidence" value="ECO:0007669"/>
    <property type="project" value="UniProtKB-UniRule"/>
</dbReference>
<dbReference type="GO" id="GO:0003735">
    <property type="term" value="F:structural constituent of ribosome"/>
    <property type="evidence" value="ECO:0007669"/>
    <property type="project" value="InterPro"/>
</dbReference>
<dbReference type="GO" id="GO:0006412">
    <property type="term" value="P:translation"/>
    <property type="evidence" value="ECO:0007669"/>
    <property type="project" value="UniProtKB-UniRule"/>
</dbReference>
<dbReference type="FunFam" id="3.30.160.810:FF:000001">
    <property type="entry name" value="50S ribosomal protein L3"/>
    <property type="match status" value="1"/>
</dbReference>
<dbReference type="FunFam" id="2.40.30.10:FF:000065">
    <property type="entry name" value="50S ribosomal protein L3, chloroplastic"/>
    <property type="match status" value="1"/>
</dbReference>
<dbReference type="Gene3D" id="3.30.160.810">
    <property type="match status" value="1"/>
</dbReference>
<dbReference type="Gene3D" id="2.40.30.10">
    <property type="entry name" value="Translation factors"/>
    <property type="match status" value="1"/>
</dbReference>
<dbReference type="HAMAP" id="MF_01325_B">
    <property type="entry name" value="Ribosomal_uL3_B"/>
    <property type="match status" value="1"/>
</dbReference>
<dbReference type="InterPro" id="IPR000597">
    <property type="entry name" value="Ribosomal_uL3"/>
</dbReference>
<dbReference type="InterPro" id="IPR019927">
    <property type="entry name" value="Ribosomal_uL3_bac/org-type"/>
</dbReference>
<dbReference type="InterPro" id="IPR019926">
    <property type="entry name" value="Ribosomal_uL3_CS"/>
</dbReference>
<dbReference type="InterPro" id="IPR009000">
    <property type="entry name" value="Transl_B-barrel_sf"/>
</dbReference>
<dbReference type="NCBIfam" id="TIGR03625">
    <property type="entry name" value="L3_bact"/>
    <property type="match status" value="1"/>
</dbReference>
<dbReference type="PANTHER" id="PTHR11229">
    <property type="entry name" value="50S RIBOSOMAL PROTEIN L3"/>
    <property type="match status" value="1"/>
</dbReference>
<dbReference type="PANTHER" id="PTHR11229:SF16">
    <property type="entry name" value="LARGE RIBOSOMAL SUBUNIT PROTEIN UL3C"/>
    <property type="match status" value="1"/>
</dbReference>
<dbReference type="Pfam" id="PF00297">
    <property type="entry name" value="Ribosomal_L3"/>
    <property type="match status" value="1"/>
</dbReference>
<dbReference type="SUPFAM" id="SSF50447">
    <property type="entry name" value="Translation proteins"/>
    <property type="match status" value="1"/>
</dbReference>
<dbReference type="PROSITE" id="PS00474">
    <property type="entry name" value="RIBOSOMAL_L3"/>
    <property type="match status" value="1"/>
</dbReference>
<gene>
    <name evidence="1" type="primary">rplC</name>
    <name evidence="1" type="synonym">rpl3</name>
    <name type="ordered locus">P9215_18301</name>
</gene>
<feature type="chain" id="PRO_1000067567" description="Large ribosomal subunit protein uL3">
    <location>
        <begin position="1"/>
        <end position="217"/>
    </location>
</feature>
<feature type="region of interest" description="Disordered" evidence="2">
    <location>
        <begin position="129"/>
        <end position="162"/>
    </location>
</feature>
<feature type="compositionally biased region" description="Low complexity" evidence="2">
    <location>
        <begin position="142"/>
        <end position="153"/>
    </location>
</feature>
<accession>A8G762</accession>
<proteinExistence type="inferred from homology"/>
<evidence type="ECO:0000255" key="1">
    <source>
        <dbReference type="HAMAP-Rule" id="MF_01325"/>
    </source>
</evidence>
<evidence type="ECO:0000256" key="2">
    <source>
        <dbReference type="SAM" id="MobiDB-lite"/>
    </source>
</evidence>
<evidence type="ECO:0000305" key="3"/>
<protein>
    <recommendedName>
        <fullName evidence="1">Large ribosomal subunit protein uL3</fullName>
    </recommendedName>
    <alternativeName>
        <fullName evidence="3">50S ribosomal protein L3</fullName>
    </alternativeName>
</protein>
<reference key="1">
    <citation type="journal article" date="2007" name="PLoS Genet.">
        <title>Patterns and implications of gene gain and loss in the evolution of Prochlorococcus.</title>
        <authorList>
            <person name="Kettler G.C."/>
            <person name="Martiny A.C."/>
            <person name="Huang K."/>
            <person name="Zucker J."/>
            <person name="Coleman M.L."/>
            <person name="Rodrigue S."/>
            <person name="Chen F."/>
            <person name="Lapidus A."/>
            <person name="Ferriera S."/>
            <person name="Johnson J."/>
            <person name="Steglich C."/>
            <person name="Church G.M."/>
            <person name="Richardson P."/>
            <person name="Chisholm S.W."/>
        </authorList>
    </citation>
    <scope>NUCLEOTIDE SEQUENCE [LARGE SCALE GENOMIC DNA]</scope>
    <source>
        <strain>MIT 9215</strain>
    </source>
</reference>
<organism>
    <name type="scientific">Prochlorococcus marinus (strain MIT 9215)</name>
    <dbReference type="NCBI Taxonomy" id="93060"/>
    <lineage>
        <taxon>Bacteria</taxon>
        <taxon>Bacillati</taxon>
        <taxon>Cyanobacteriota</taxon>
        <taxon>Cyanophyceae</taxon>
        <taxon>Synechococcales</taxon>
        <taxon>Prochlorococcaceae</taxon>
        <taxon>Prochlorococcus</taxon>
    </lineage>
</organism>